<sequence>CGPCFTTDPYTESKCATCCGGRGKCVGPQCLCNRI</sequence>
<feature type="peptide" id="PRO_0000044934" description="Peptide P2" evidence="4">
    <location>
        <begin position="1"/>
        <end position="35"/>
    </location>
</feature>
<feature type="disulfide bond" evidence="1 3">
    <location>
        <begin position="1"/>
        <end position="18"/>
    </location>
</feature>
<feature type="disulfide bond" evidence="1 3">
    <location>
        <begin position="4"/>
        <end position="25"/>
    </location>
</feature>
<feature type="disulfide bond" evidence="1 3">
    <location>
        <begin position="15"/>
        <end position="30"/>
    </location>
</feature>
<feature type="disulfide bond" evidence="1 3">
    <location>
        <begin position="19"/>
        <end position="32"/>
    </location>
</feature>
<dbReference type="PIR" id="A01758">
    <property type="entry name" value="NTSRPM"/>
</dbReference>
<dbReference type="SMR" id="P01498"/>
<dbReference type="GO" id="GO:0005576">
    <property type="term" value="C:extracellular region"/>
    <property type="evidence" value="ECO:0007669"/>
    <property type="project" value="UniProtKB-SubCell"/>
</dbReference>
<dbReference type="GO" id="GO:0017081">
    <property type="term" value="F:chloride channel regulator activity"/>
    <property type="evidence" value="ECO:0007669"/>
    <property type="project" value="UniProtKB-KW"/>
</dbReference>
<dbReference type="GO" id="GO:0090729">
    <property type="term" value="F:toxin activity"/>
    <property type="evidence" value="ECO:0007669"/>
    <property type="project" value="UniProtKB-KW"/>
</dbReference>
<dbReference type="InterPro" id="IPR036574">
    <property type="entry name" value="Scorpion_toxin-like_sf"/>
</dbReference>
<dbReference type="InterPro" id="IPR007958">
    <property type="entry name" value="Scorpion_toxinS_Cl_inh"/>
</dbReference>
<dbReference type="Pfam" id="PF05294">
    <property type="entry name" value="Toxin_5"/>
    <property type="match status" value="1"/>
</dbReference>
<dbReference type="SUPFAM" id="SSF57095">
    <property type="entry name" value="Scorpion toxin-like"/>
    <property type="match status" value="1"/>
</dbReference>
<dbReference type="PROSITE" id="PS51200">
    <property type="entry name" value="SHORT_SCORPION_CHLORIDE"/>
    <property type="match status" value="1"/>
</dbReference>
<comment type="function">
    <text evidence="2">Toxin with unknown function in healthy organisms. On glioma cells, interacts with chloride channels (probably ClC-3/CLCN3) and MMP2 at the surface of glioma cells. This complex is then internalized via caveolae, thus inhibiting the chloride channels necessary for cell shrinkage and tumor propagation (By similarity).</text>
</comment>
<comment type="subcellular location">
    <subcellularLocation>
        <location evidence="4">Secreted</location>
    </subcellularLocation>
</comment>
<comment type="tissue specificity">
    <text evidence="6">Expressed by the venom gland.</text>
</comment>
<comment type="domain">
    <text evidence="1">The presence of a 'disulfide through disulfide knot' structurally defines this protein as a knottin.</text>
</comment>
<comment type="similarity">
    <text evidence="3">Belongs to the short scorpion toxin superfamily. Chloride channel inhibitor family.</text>
</comment>
<proteinExistence type="evidence at protein level"/>
<reference key="1">
    <citation type="journal article" date="1985" name="Toxicon">
        <title>Characterization of ten proteins from the venom of the Moroccan scorpion Androctonus mauretanicus mauretanicus, six of which are toxic to the mouse.</title>
        <authorList>
            <person name="Rosso J.-P."/>
            <person name="Rochat H."/>
        </authorList>
    </citation>
    <scope>PROTEIN SEQUENCE</scope>
    <scope>SUBCELLULAR LOCATION</scope>
    <source>
        <tissue>Venom</tissue>
    </source>
</reference>
<evidence type="ECO:0000250" key="1">
    <source>
        <dbReference type="UniProtKB" id="P15222"/>
    </source>
</evidence>
<evidence type="ECO:0000250" key="2">
    <source>
        <dbReference type="UniProtKB" id="Q9UAD0"/>
    </source>
</evidence>
<evidence type="ECO:0000255" key="3">
    <source>
        <dbReference type="PROSITE-ProRule" id="PRU00545"/>
    </source>
</evidence>
<evidence type="ECO:0000269" key="4">
    <source>
    </source>
</evidence>
<evidence type="ECO:0000303" key="5">
    <source>
    </source>
</evidence>
<evidence type="ECO:0000305" key="6">
    <source>
    </source>
</evidence>
<name>CTXL_ANDMA</name>
<organism>
    <name type="scientific">Androctonus mauritanicus mauritanicus</name>
    <name type="common">Scorpion</name>
    <dbReference type="NCBI Taxonomy" id="6860"/>
    <lineage>
        <taxon>Eukaryota</taxon>
        <taxon>Metazoa</taxon>
        <taxon>Ecdysozoa</taxon>
        <taxon>Arthropoda</taxon>
        <taxon>Chelicerata</taxon>
        <taxon>Arachnida</taxon>
        <taxon>Scorpiones</taxon>
        <taxon>Buthida</taxon>
        <taxon>Buthoidea</taxon>
        <taxon>Buthidae</taxon>
        <taxon>Androctonus</taxon>
    </lineage>
</organism>
<accession>P01498</accession>
<keyword id="KW-1265">Chloride channel impairing toxin</keyword>
<keyword id="KW-0903">Direct protein sequencing</keyword>
<keyword id="KW-1015">Disulfide bond</keyword>
<keyword id="KW-0872">Ion channel impairing toxin</keyword>
<keyword id="KW-0960">Knottin</keyword>
<keyword id="KW-0964">Secreted</keyword>
<keyword id="KW-0800">Toxin</keyword>
<keyword id="KW-0870">Voltage-gated chloride channel impairing toxin</keyword>
<protein>
    <recommendedName>
        <fullName evidence="5">Peptide P2</fullName>
        <shortName>AmmP2</shortName>
    </recommendedName>
</protein>